<evidence type="ECO:0000255" key="1">
    <source>
        <dbReference type="HAMAP-Rule" id="MF_00023"/>
    </source>
</evidence>
<evidence type="ECO:0000256" key="2">
    <source>
        <dbReference type="SAM" id="MobiDB-lite"/>
    </source>
</evidence>
<feature type="chain" id="PRO_1000002105" description="SsrA-binding protein">
    <location>
        <begin position="1"/>
        <end position="165"/>
    </location>
</feature>
<feature type="region of interest" description="Disordered" evidence="2">
    <location>
        <begin position="1"/>
        <end position="21"/>
    </location>
</feature>
<feature type="compositionally biased region" description="Basic residues" evidence="2">
    <location>
        <begin position="1"/>
        <end position="10"/>
    </location>
</feature>
<organism>
    <name type="scientific">Prochlorococcus marinus (strain NATL1A)</name>
    <dbReference type="NCBI Taxonomy" id="167555"/>
    <lineage>
        <taxon>Bacteria</taxon>
        <taxon>Bacillati</taxon>
        <taxon>Cyanobacteriota</taxon>
        <taxon>Cyanophyceae</taxon>
        <taxon>Synechococcales</taxon>
        <taxon>Prochlorococcaceae</taxon>
        <taxon>Prochlorococcus</taxon>
    </lineage>
</organism>
<dbReference type="EMBL" id="CP000553">
    <property type="protein sequence ID" value="ABM76624.1"/>
    <property type="molecule type" value="Genomic_DNA"/>
</dbReference>
<dbReference type="RefSeq" id="WP_011824571.1">
    <property type="nucleotide sequence ID" value="NC_008819.1"/>
</dbReference>
<dbReference type="SMR" id="A2C564"/>
<dbReference type="KEGG" id="pme:NATL1_20681"/>
<dbReference type="eggNOG" id="COG0691">
    <property type="taxonomic scope" value="Bacteria"/>
</dbReference>
<dbReference type="HOGENOM" id="CLU_108953_0_1_3"/>
<dbReference type="Proteomes" id="UP000002592">
    <property type="component" value="Chromosome"/>
</dbReference>
<dbReference type="GO" id="GO:0005829">
    <property type="term" value="C:cytosol"/>
    <property type="evidence" value="ECO:0007669"/>
    <property type="project" value="TreeGrafter"/>
</dbReference>
<dbReference type="GO" id="GO:0003723">
    <property type="term" value="F:RNA binding"/>
    <property type="evidence" value="ECO:0007669"/>
    <property type="project" value="UniProtKB-UniRule"/>
</dbReference>
<dbReference type="GO" id="GO:0070929">
    <property type="term" value="P:trans-translation"/>
    <property type="evidence" value="ECO:0007669"/>
    <property type="project" value="UniProtKB-UniRule"/>
</dbReference>
<dbReference type="Gene3D" id="2.40.280.10">
    <property type="match status" value="1"/>
</dbReference>
<dbReference type="HAMAP" id="MF_00023">
    <property type="entry name" value="SmpB"/>
    <property type="match status" value="1"/>
</dbReference>
<dbReference type="InterPro" id="IPR023620">
    <property type="entry name" value="SmpB"/>
</dbReference>
<dbReference type="InterPro" id="IPR000037">
    <property type="entry name" value="SsrA-bd_prot"/>
</dbReference>
<dbReference type="InterPro" id="IPR020081">
    <property type="entry name" value="SsrA-bd_prot_CS"/>
</dbReference>
<dbReference type="NCBIfam" id="NF003843">
    <property type="entry name" value="PRK05422.1"/>
    <property type="match status" value="1"/>
</dbReference>
<dbReference type="NCBIfam" id="TIGR00086">
    <property type="entry name" value="smpB"/>
    <property type="match status" value="1"/>
</dbReference>
<dbReference type="PANTHER" id="PTHR30308:SF2">
    <property type="entry name" value="SSRA-BINDING PROTEIN"/>
    <property type="match status" value="1"/>
</dbReference>
<dbReference type="PANTHER" id="PTHR30308">
    <property type="entry name" value="TMRNA-BINDING COMPONENT OF TRANS-TRANSLATION TAGGING COMPLEX"/>
    <property type="match status" value="1"/>
</dbReference>
<dbReference type="Pfam" id="PF01668">
    <property type="entry name" value="SmpB"/>
    <property type="match status" value="1"/>
</dbReference>
<dbReference type="SUPFAM" id="SSF74982">
    <property type="entry name" value="Small protein B (SmpB)"/>
    <property type="match status" value="1"/>
</dbReference>
<dbReference type="PROSITE" id="PS01317">
    <property type="entry name" value="SSRP"/>
    <property type="match status" value="1"/>
</dbReference>
<sequence length="165" mass="19055">MSKKGKKKSKNNSSVDGNRRLAENRQARYEYEILETLETGLELLGTEVKSIRAGKVNLKDGFCLIKKDQIQLHNVHISPHNHAGKFFNHEPLRIKRLLAHRKEIEKLKISLERKGLTIIPLSLYLKGSWIKLKIGVGKGRKTHDKRDREKINDSKRDVANALKRF</sequence>
<gene>
    <name evidence="1" type="primary">smpB</name>
    <name type="ordered locus">NATL1_20681</name>
</gene>
<comment type="function">
    <text evidence="1">Required for rescue of stalled ribosomes mediated by trans-translation. Binds to transfer-messenger RNA (tmRNA), required for stable association of tmRNA with ribosomes. tmRNA and SmpB together mimic tRNA shape, replacing the anticodon stem-loop with SmpB. tmRNA is encoded by the ssrA gene; the 2 termini fold to resemble tRNA(Ala) and it encodes a 'tag peptide', a short internal open reading frame. During trans-translation Ala-aminoacylated tmRNA acts like a tRNA, entering the A-site of stalled ribosomes, displacing the stalled mRNA. The ribosome then switches to translate the ORF on the tmRNA; the nascent peptide is terminated with the 'tag peptide' encoded by the tmRNA and targeted for degradation. The ribosome is freed to recommence translation, which seems to be the essential function of trans-translation.</text>
</comment>
<comment type="subcellular location">
    <subcellularLocation>
        <location evidence="1">Cytoplasm</location>
    </subcellularLocation>
    <text evidence="1">The tmRNA-SmpB complex associates with stalled 70S ribosomes.</text>
</comment>
<comment type="similarity">
    <text evidence="1">Belongs to the SmpB family.</text>
</comment>
<keyword id="KW-0963">Cytoplasm</keyword>
<keyword id="KW-0694">RNA-binding</keyword>
<name>SSRP_PROM1</name>
<proteinExistence type="inferred from homology"/>
<accession>A2C564</accession>
<reference key="1">
    <citation type="journal article" date="2007" name="PLoS Genet.">
        <title>Patterns and implications of gene gain and loss in the evolution of Prochlorococcus.</title>
        <authorList>
            <person name="Kettler G.C."/>
            <person name="Martiny A.C."/>
            <person name="Huang K."/>
            <person name="Zucker J."/>
            <person name="Coleman M.L."/>
            <person name="Rodrigue S."/>
            <person name="Chen F."/>
            <person name="Lapidus A."/>
            <person name="Ferriera S."/>
            <person name="Johnson J."/>
            <person name="Steglich C."/>
            <person name="Church G.M."/>
            <person name="Richardson P."/>
            <person name="Chisholm S.W."/>
        </authorList>
    </citation>
    <scope>NUCLEOTIDE SEQUENCE [LARGE SCALE GENOMIC DNA]</scope>
    <source>
        <strain>NATL1A</strain>
    </source>
</reference>
<protein>
    <recommendedName>
        <fullName evidence="1">SsrA-binding protein</fullName>
    </recommendedName>
    <alternativeName>
        <fullName evidence="1">Small protein B</fullName>
    </alternativeName>
</protein>